<accession>Q1B6X7</accession>
<reference key="1">
    <citation type="submission" date="2006-06" db="EMBL/GenBank/DDBJ databases">
        <title>Complete sequence of chromosome of Mycobacterium sp. MCS.</title>
        <authorList>
            <consortium name="US DOE Joint Genome Institute"/>
            <person name="Copeland A."/>
            <person name="Lucas S."/>
            <person name="Lapidus A."/>
            <person name="Barry K."/>
            <person name="Detter J.C."/>
            <person name="Glavina del Rio T."/>
            <person name="Hammon N."/>
            <person name="Israni S."/>
            <person name="Dalin E."/>
            <person name="Tice H."/>
            <person name="Pitluck S."/>
            <person name="Martinez M."/>
            <person name="Schmutz J."/>
            <person name="Larimer F."/>
            <person name="Land M."/>
            <person name="Hauser L."/>
            <person name="Kyrpides N."/>
            <person name="Kim E."/>
            <person name="Miller C.D."/>
            <person name="Hughes J.E."/>
            <person name="Anderson A.J."/>
            <person name="Sims R.C."/>
            <person name="Richardson P."/>
        </authorList>
    </citation>
    <scope>NUCLEOTIDE SEQUENCE [LARGE SCALE GENOMIC DNA]</scope>
    <source>
        <strain>MCS</strain>
    </source>
</reference>
<keyword id="KW-0131">Cell cycle</keyword>
<keyword id="KW-0132">Cell division</keyword>
<keyword id="KW-0963">Cytoplasm</keyword>
<keyword id="KW-0717">Septation</keyword>
<proteinExistence type="inferred from homology"/>
<sequence length="220" mass="25146">MSTLHKVKAYFGMAPMDDYDDEYYEDDDRAERGAARGYARRPREDRFEEEGYIDRAGREYDDRPAPREYDEPPIYRGGYDEPRFDPRLRGPREFERPAPRLGALRGSTRGALAMDPRRMAMLFEEGSPLAKITTLRPKDYSEARTIGEKFRDGTPVIMDLVSMDNADAKRLVDFAAGLAFALRGSFDKVATKVFLLSPADVDVTADERRRIAEAGFYAYQ</sequence>
<organism>
    <name type="scientific">Mycobacterium sp. (strain MCS)</name>
    <dbReference type="NCBI Taxonomy" id="164756"/>
    <lineage>
        <taxon>Bacteria</taxon>
        <taxon>Bacillati</taxon>
        <taxon>Actinomycetota</taxon>
        <taxon>Actinomycetes</taxon>
        <taxon>Mycobacteriales</taxon>
        <taxon>Mycobacteriaceae</taxon>
        <taxon>Mycobacterium</taxon>
    </lineage>
</organism>
<name>SEPF_MYCSS</name>
<feature type="chain" id="PRO_0000334046" description="Cell division protein SepF">
    <location>
        <begin position="1"/>
        <end position="220"/>
    </location>
</feature>
<feature type="region of interest" description="Disordered" evidence="2">
    <location>
        <begin position="33"/>
        <end position="82"/>
    </location>
</feature>
<feature type="compositionally biased region" description="Basic and acidic residues" evidence="2">
    <location>
        <begin position="52"/>
        <end position="70"/>
    </location>
</feature>
<comment type="function">
    <text evidence="1">Cell division protein that is part of the divisome complex and is recruited early to the Z-ring. Probably stimulates Z-ring formation, perhaps through the cross-linking of FtsZ protofilaments. Its function overlaps with FtsA.</text>
</comment>
<comment type="subunit">
    <text evidence="1">Homodimer. Interacts with FtsZ.</text>
</comment>
<comment type="subcellular location">
    <subcellularLocation>
        <location evidence="1">Cytoplasm</location>
    </subcellularLocation>
    <text evidence="1">Localizes to the division site, in a FtsZ-dependent manner.</text>
</comment>
<comment type="similarity">
    <text evidence="1">Belongs to the SepF family.</text>
</comment>
<evidence type="ECO:0000255" key="1">
    <source>
        <dbReference type="HAMAP-Rule" id="MF_01197"/>
    </source>
</evidence>
<evidence type="ECO:0000256" key="2">
    <source>
        <dbReference type="SAM" id="MobiDB-lite"/>
    </source>
</evidence>
<dbReference type="EMBL" id="CP000384">
    <property type="protein sequence ID" value="ABG09357.1"/>
    <property type="molecule type" value="Genomic_DNA"/>
</dbReference>
<dbReference type="SMR" id="Q1B6X7"/>
<dbReference type="KEGG" id="mmc:Mmcs_3250"/>
<dbReference type="HOGENOM" id="CLU_078499_0_0_11"/>
<dbReference type="BioCyc" id="MSP164756:G1G6O-3316-MONOMER"/>
<dbReference type="GO" id="GO:0005737">
    <property type="term" value="C:cytoplasm"/>
    <property type="evidence" value="ECO:0007669"/>
    <property type="project" value="UniProtKB-SubCell"/>
</dbReference>
<dbReference type="GO" id="GO:0000917">
    <property type="term" value="P:division septum assembly"/>
    <property type="evidence" value="ECO:0007669"/>
    <property type="project" value="UniProtKB-KW"/>
</dbReference>
<dbReference type="GO" id="GO:0043093">
    <property type="term" value="P:FtsZ-dependent cytokinesis"/>
    <property type="evidence" value="ECO:0007669"/>
    <property type="project" value="UniProtKB-UniRule"/>
</dbReference>
<dbReference type="FunFam" id="3.30.110.150:FF:000001">
    <property type="entry name" value="Cell division protein SepF"/>
    <property type="match status" value="1"/>
</dbReference>
<dbReference type="Gene3D" id="3.30.110.150">
    <property type="entry name" value="SepF-like protein"/>
    <property type="match status" value="1"/>
</dbReference>
<dbReference type="HAMAP" id="MF_01197">
    <property type="entry name" value="SepF"/>
    <property type="match status" value="1"/>
</dbReference>
<dbReference type="InterPro" id="IPR023052">
    <property type="entry name" value="Cell_div_SepF"/>
</dbReference>
<dbReference type="InterPro" id="IPR007561">
    <property type="entry name" value="Cell_div_SepF/SepF-rel"/>
</dbReference>
<dbReference type="InterPro" id="IPR038594">
    <property type="entry name" value="SepF-like_sf"/>
</dbReference>
<dbReference type="PANTHER" id="PTHR35798">
    <property type="entry name" value="CELL DIVISION PROTEIN SEPF"/>
    <property type="match status" value="1"/>
</dbReference>
<dbReference type="PANTHER" id="PTHR35798:SF1">
    <property type="entry name" value="CELL DIVISION PROTEIN SEPF"/>
    <property type="match status" value="1"/>
</dbReference>
<dbReference type="Pfam" id="PF04472">
    <property type="entry name" value="SepF"/>
    <property type="match status" value="1"/>
</dbReference>
<protein>
    <recommendedName>
        <fullName evidence="1">Cell division protein SepF</fullName>
    </recommendedName>
</protein>
<gene>
    <name evidence="1" type="primary">sepF</name>
    <name type="ordered locus">Mmcs_3250</name>
</gene>